<organism>
    <name type="scientific">Homo sapiens</name>
    <name type="common">Human</name>
    <dbReference type="NCBI Taxonomy" id="9606"/>
    <lineage>
        <taxon>Eukaryota</taxon>
        <taxon>Metazoa</taxon>
        <taxon>Chordata</taxon>
        <taxon>Craniata</taxon>
        <taxon>Vertebrata</taxon>
        <taxon>Euteleostomi</taxon>
        <taxon>Mammalia</taxon>
        <taxon>Eutheria</taxon>
        <taxon>Euarchontoglires</taxon>
        <taxon>Primates</taxon>
        <taxon>Haplorrhini</taxon>
        <taxon>Catarrhini</taxon>
        <taxon>Hominidae</taxon>
        <taxon>Homo</taxon>
    </lineage>
</organism>
<protein>
    <recommendedName>
        <fullName evidence="3">Small ribosomal subunit protein uS3m</fullName>
    </recommendedName>
    <alternativeName>
        <fullName>28S ribosomal protein S24, mitochondrial</fullName>
        <shortName>MRP-S24</shortName>
        <shortName>S24mt</shortName>
    </alternativeName>
    <alternativeName>
        <fullName>bMRP-47</fullName>
        <shortName>bMRP47</shortName>
    </alternativeName>
</protein>
<name>RT24_HUMAN</name>
<reference key="1">
    <citation type="journal article" date="1998" name="Proc. Natl. Acad. Sci. U.S.A.">
        <title>Identification of genes expressed in human CD34(+) hematopoietic stem/progenitor cells by expressed sequence tags and efficient full-length cDNA cloning.</title>
        <authorList>
            <person name="Mao M."/>
            <person name="Fu G."/>
            <person name="Wu J.-S."/>
            <person name="Zhang Q.-H."/>
            <person name="Zhou J."/>
            <person name="Kan L.-X."/>
            <person name="Huang Q.-H."/>
            <person name="He K.-L."/>
            <person name="Gu B.-W."/>
            <person name="Han Z.-G."/>
            <person name="Shen Y."/>
            <person name="Gu J."/>
            <person name="Yu Y.-P."/>
            <person name="Xu S.-H."/>
            <person name="Wang Y.-X."/>
            <person name="Chen S.-J."/>
            <person name="Chen Z."/>
        </authorList>
    </citation>
    <scope>NUCLEOTIDE SEQUENCE [LARGE SCALE MRNA]</scope>
    <source>
        <tissue>Umbilical cord blood</tissue>
    </source>
</reference>
<reference key="2">
    <citation type="journal article" date="2003" name="Science">
        <title>Human chromosome 7: DNA sequence and biology.</title>
        <authorList>
            <person name="Scherer S.W."/>
            <person name="Cheung J."/>
            <person name="MacDonald J.R."/>
            <person name="Osborne L.R."/>
            <person name="Nakabayashi K."/>
            <person name="Herbrick J.-A."/>
            <person name="Carson A.R."/>
            <person name="Parker-Katiraee L."/>
            <person name="Skaug J."/>
            <person name="Khaja R."/>
            <person name="Zhang J."/>
            <person name="Hudek A.K."/>
            <person name="Li M."/>
            <person name="Haddad M."/>
            <person name="Duggan G.E."/>
            <person name="Fernandez B.A."/>
            <person name="Kanematsu E."/>
            <person name="Gentles S."/>
            <person name="Christopoulos C.C."/>
            <person name="Choufani S."/>
            <person name="Kwasnicka D."/>
            <person name="Zheng X.H."/>
            <person name="Lai Z."/>
            <person name="Nusskern D.R."/>
            <person name="Zhang Q."/>
            <person name="Gu Z."/>
            <person name="Lu F."/>
            <person name="Zeesman S."/>
            <person name="Nowaczyk M.J."/>
            <person name="Teshima I."/>
            <person name="Chitayat D."/>
            <person name="Shuman C."/>
            <person name="Weksberg R."/>
            <person name="Zackai E.H."/>
            <person name="Grebe T.A."/>
            <person name="Cox S.R."/>
            <person name="Kirkpatrick S.J."/>
            <person name="Rahman N."/>
            <person name="Friedman J.M."/>
            <person name="Heng H.H.Q."/>
            <person name="Pelicci P.G."/>
            <person name="Lo-Coco F."/>
            <person name="Belloni E."/>
            <person name="Shaffer L.G."/>
            <person name="Pober B."/>
            <person name="Morton C.C."/>
            <person name="Gusella J.F."/>
            <person name="Bruns G.A.P."/>
            <person name="Korf B.R."/>
            <person name="Quade B.J."/>
            <person name="Ligon A.H."/>
            <person name="Ferguson H."/>
            <person name="Higgins A.W."/>
            <person name="Leach N.T."/>
            <person name="Herrick S.R."/>
            <person name="Lemyre E."/>
            <person name="Farra C.G."/>
            <person name="Kim H.-G."/>
            <person name="Summers A.M."/>
            <person name="Gripp K.W."/>
            <person name="Roberts W."/>
            <person name="Szatmari P."/>
            <person name="Winsor E.J.T."/>
            <person name="Grzeschik K.-H."/>
            <person name="Teebi A."/>
            <person name="Minassian B.A."/>
            <person name="Kere J."/>
            <person name="Armengol L."/>
            <person name="Pujana M.A."/>
            <person name="Estivill X."/>
            <person name="Wilson M.D."/>
            <person name="Koop B.F."/>
            <person name="Tosi S."/>
            <person name="Moore G.E."/>
            <person name="Boright A.P."/>
            <person name="Zlotorynski E."/>
            <person name="Kerem B."/>
            <person name="Kroisel P.M."/>
            <person name="Petek E."/>
            <person name="Oscier D.G."/>
            <person name="Mould S.J."/>
            <person name="Doehner H."/>
            <person name="Doehner K."/>
            <person name="Rommens J.M."/>
            <person name="Vincent J.B."/>
            <person name="Venter J.C."/>
            <person name="Li P.W."/>
            <person name="Mural R.J."/>
            <person name="Adams M.D."/>
            <person name="Tsui L.-C."/>
        </authorList>
    </citation>
    <scope>NUCLEOTIDE SEQUENCE [LARGE SCALE GENOMIC DNA]</scope>
</reference>
<reference key="3">
    <citation type="submission" date="2005-07" db="EMBL/GenBank/DDBJ databases">
        <authorList>
            <person name="Mural R.J."/>
            <person name="Istrail S."/>
            <person name="Sutton G.G."/>
            <person name="Florea L."/>
            <person name="Halpern A.L."/>
            <person name="Mobarry C.M."/>
            <person name="Lippert R."/>
            <person name="Walenz B."/>
            <person name="Shatkay H."/>
            <person name="Dew I."/>
            <person name="Miller J.R."/>
            <person name="Flanigan M.J."/>
            <person name="Edwards N.J."/>
            <person name="Bolanos R."/>
            <person name="Fasulo D."/>
            <person name="Halldorsson B.V."/>
            <person name="Hannenhalli S."/>
            <person name="Turner R."/>
            <person name="Yooseph S."/>
            <person name="Lu F."/>
            <person name="Nusskern D.R."/>
            <person name="Shue B.C."/>
            <person name="Zheng X.H."/>
            <person name="Zhong F."/>
            <person name="Delcher A.L."/>
            <person name="Huson D.H."/>
            <person name="Kravitz S.A."/>
            <person name="Mouchard L."/>
            <person name="Reinert K."/>
            <person name="Remington K.A."/>
            <person name="Clark A.G."/>
            <person name="Waterman M.S."/>
            <person name="Eichler E.E."/>
            <person name="Adams M.D."/>
            <person name="Hunkapiller M.W."/>
            <person name="Myers E.W."/>
            <person name="Venter J.C."/>
        </authorList>
    </citation>
    <scope>NUCLEOTIDE SEQUENCE [LARGE SCALE GENOMIC DNA]</scope>
</reference>
<reference key="4">
    <citation type="journal article" date="2004" name="Genome Res.">
        <title>The status, quality, and expansion of the NIH full-length cDNA project: the Mammalian Gene Collection (MGC).</title>
        <authorList>
            <consortium name="The MGC Project Team"/>
        </authorList>
    </citation>
    <scope>NUCLEOTIDE SEQUENCE [LARGE SCALE MRNA]</scope>
    <source>
        <tissue>Lung</tissue>
    </source>
</reference>
<reference key="5">
    <citation type="journal article" date="2001" name="Genomics">
        <title>The human mitochondrial ribosomal protein genes: mapping of 54 genes to the chromosomes and implications for human disorders.</title>
        <authorList>
            <person name="Kenmochi N."/>
            <person name="Suzuki T."/>
            <person name="Uechi T."/>
            <person name="Magoori M."/>
            <person name="Kuniba M."/>
            <person name="Higa S."/>
            <person name="Watanabe K."/>
            <person name="Tanaka T."/>
        </authorList>
    </citation>
    <scope>NUCLEOTIDE SEQUENCE [GENOMIC DNA] OF 75-112</scope>
</reference>
<reference key="6">
    <citation type="journal article" date="2000" name="J. Biol. Chem.">
        <title>A proteomics approach to the identification of mammalian mitochondrial small subunit ribosomal proteins.</title>
        <authorList>
            <person name="Koc E.C."/>
            <person name="Burkhart W."/>
            <person name="Blackburn K."/>
            <person name="Moseley A."/>
            <person name="Koc H."/>
            <person name="Spremulli L.L."/>
        </authorList>
    </citation>
    <scope>IDENTIFICATION</scope>
</reference>
<reference key="7">
    <citation type="journal article" date="2001" name="J. Biol. Chem.">
        <title>Proteomic analysis of the mammalian mitochondrial ribosome. Identification of protein components in the 28S small subunit.</title>
        <authorList>
            <person name="Suzuki T."/>
            <person name="Terasaki M."/>
            <person name="Takemoto-Hori C."/>
            <person name="Hanada T."/>
            <person name="Ueda T."/>
            <person name="Wada A."/>
            <person name="Watanabe K."/>
        </authorList>
    </citation>
    <scope>IDENTIFICATION</scope>
</reference>
<reference key="8">
    <citation type="journal article" date="2011" name="BMC Syst. Biol.">
        <title>Initial characterization of the human central proteome.</title>
        <authorList>
            <person name="Burkard T.R."/>
            <person name="Planyavsky M."/>
            <person name="Kaupe I."/>
            <person name="Breitwieser F.P."/>
            <person name="Buerckstuemmer T."/>
            <person name="Bennett K.L."/>
            <person name="Superti-Furga G."/>
            <person name="Colinge J."/>
        </authorList>
    </citation>
    <scope>IDENTIFICATION BY MASS SPECTROMETRY [LARGE SCALE ANALYSIS]</scope>
</reference>
<reference key="9">
    <citation type="journal article" date="2015" name="Proteomics">
        <title>N-terminome analysis of the human mitochondrial proteome.</title>
        <authorList>
            <person name="Vaca Jacome A.S."/>
            <person name="Rabilloud T."/>
            <person name="Schaeffer-Reiss C."/>
            <person name="Rompais M."/>
            <person name="Ayoub D."/>
            <person name="Lane L."/>
            <person name="Bairoch A."/>
            <person name="Van Dorsselaer A."/>
            <person name="Carapito C."/>
        </authorList>
    </citation>
    <scope>IDENTIFICATION BY MASS SPECTROMETRY [LARGE SCALE ANALYSIS]</scope>
</reference>
<reference key="10">
    <citation type="journal article" date="2015" name="Science">
        <title>Ribosome. The structure of the human mitochondrial ribosome.</title>
        <authorList>
            <person name="Amunts A."/>
            <person name="Brown A."/>
            <person name="Toots J."/>
            <person name="Scheres S.H."/>
            <person name="Ramakrishnan V."/>
        </authorList>
    </citation>
    <scope>STRUCTURE BY ELECTRON MICROSCOPY (3.50 ANGSTROMS)</scope>
    <scope>SUBUNIT</scope>
    <scope>SUBCELLULAR LOCATION</scope>
</reference>
<feature type="transit peptide" description="Mitochondrion" evidence="1">
    <location>
        <begin position="1"/>
        <end position="35"/>
    </location>
</feature>
<feature type="chain" id="PRO_0000273066" description="Small ribosomal subunit protein uS3m">
    <location>
        <begin position="36"/>
        <end position="167"/>
    </location>
</feature>
<feature type="sequence variant" id="VAR_030077" description="In dbSNP:rs670573.">
    <original>W</original>
    <variation>R</variation>
    <location>
        <position position="97"/>
    </location>
</feature>
<feature type="helix" evidence="6">
    <location>
        <begin position="21"/>
        <end position="24"/>
    </location>
</feature>
<feature type="helix" evidence="6">
    <location>
        <begin position="53"/>
        <end position="56"/>
    </location>
</feature>
<feature type="helix" evidence="6">
    <location>
        <begin position="59"/>
        <end position="61"/>
    </location>
</feature>
<feature type="turn" evidence="6">
    <location>
        <begin position="62"/>
        <end position="65"/>
    </location>
</feature>
<feature type="strand" evidence="6">
    <location>
        <begin position="69"/>
        <end position="71"/>
    </location>
</feature>
<feature type="strand" evidence="5">
    <location>
        <begin position="76"/>
        <end position="78"/>
    </location>
</feature>
<feature type="helix" evidence="6">
    <location>
        <begin position="82"/>
        <end position="99"/>
    </location>
</feature>
<feature type="turn" evidence="6">
    <location>
        <begin position="101"/>
        <end position="103"/>
    </location>
</feature>
<feature type="strand" evidence="6">
    <location>
        <begin position="104"/>
        <end position="111"/>
    </location>
</feature>
<feature type="strand" evidence="6">
    <location>
        <begin position="117"/>
        <end position="125"/>
    </location>
</feature>
<feature type="helix" evidence="6">
    <location>
        <begin position="129"/>
        <end position="147"/>
    </location>
</feature>
<feature type="strand" evidence="6">
    <location>
        <begin position="151"/>
        <end position="153"/>
    </location>
</feature>
<feature type="strand" evidence="6">
    <location>
        <begin position="156"/>
        <end position="160"/>
    </location>
</feature>
<feature type="strand" evidence="7">
    <location>
        <begin position="164"/>
        <end position="166"/>
    </location>
</feature>
<evidence type="ECO:0000250" key="1"/>
<evidence type="ECO:0000269" key="2">
    <source>
    </source>
</evidence>
<evidence type="ECO:0000303" key="3">
    <source>
    </source>
</evidence>
<evidence type="ECO:0000305" key="4"/>
<evidence type="ECO:0007829" key="5">
    <source>
        <dbReference type="PDB" id="8CSR"/>
    </source>
</evidence>
<evidence type="ECO:0007829" key="6">
    <source>
        <dbReference type="PDB" id="8CSS"/>
    </source>
</evidence>
<evidence type="ECO:0007829" key="7">
    <source>
        <dbReference type="PDB" id="8QRL"/>
    </source>
</evidence>
<keyword id="KW-0002">3D-structure</keyword>
<keyword id="KW-0496">Mitochondrion</keyword>
<keyword id="KW-1267">Proteomics identification</keyword>
<keyword id="KW-1185">Reference proteome</keyword>
<keyword id="KW-0687">Ribonucleoprotein</keyword>
<keyword id="KW-0689">Ribosomal protein</keyword>
<keyword id="KW-0809">Transit peptide</keyword>
<gene>
    <name type="primary">MRPS24</name>
    <name type="ORF">HSPC335</name>
</gene>
<proteinExistence type="evidence at protein level"/>
<accession>Q96EL2</accession>
<accession>A4D1U9</accession>
<accession>P82668</accession>
<accession>Q96Q23</accession>
<accession>Q9P047</accession>
<sequence length="167" mass="19015">MAASVCSGLLGPRVLSWSRELPCAWRALHTSPVCAKNRAARVRVSKGDKPVTYEEAHAPHYIAHRKGWLSLHTGNLDGEDHAAERTVEDVFLRKFMWGTFPGCLADQLVLKRRGNQLEICAVVLRQLSPHKYYFLVGYSETLLSYFYKCPVRLHLQTVPSKVVYKYL</sequence>
<dbReference type="EMBL" id="AF161453">
    <property type="protein sequence ID" value="AAF29013.1"/>
    <property type="status" value="ALT_FRAME"/>
    <property type="molecule type" value="mRNA"/>
</dbReference>
<dbReference type="EMBL" id="CH236951">
    <property type="protein sequence ID" value="EAL24009.1"/>
    <property type="molecule type" value="Genomic_DNA"/>
</dbReference>
<dbReference type="EMBL" id="CH471073">
    <property type="protein sequence ID" value="EAW94173.1"/>
    <property type="molecule type" value="Genomic_DNA"/>
</dbReference>
<dbReference type="EMBL" id="BC012167">
    <property type="protein sequence ID" value="AAH12167.1"/>
    <property type="molecule type" value="mRNA"/>
</dbReference>
<dbReference type="EMBL" id="BC054865">
    <property type="protein sequence ID" value="AAH54865.1"/>
    <property type="molecule type" value="mRNA"/>
</dbReference>
<dbReference type="EMBL" id="AB061207">
    <property type="protein sequence ID" value="BAB54957.1"/>
    <property type="molecule type" value="Genomic_DNA"/>
</dbReference>
<dbReference type="CCDS" id="CCDS5473.1"/>
<dbReference type="RefSeq" id="NP_114403.1">
    <property type="nucleotide sequence ID" value="NM_032014.3"/>
</dbReference>
<dbReference type="PDB" id="3J9M">
    <property type="method" value="EM"/>
    <property type="resolution" value="3.50 A"/>
    <property type="chains" value="AC=1-167"/>
</dbReference>
<dbReference type="PDB" id="6NU2">
    <property type="method" value="EM"/>
    <property type="resolution" value="3.90 A"/>
    <property type="chains" value="AC=36-167"/>
</dbReference>
<dbReference type="PDB" id="6NU3">
    <property type="method" value="EM"/>
    <property type="resolution" value="4.40 A"/>
    <property type="chains" value="AC=1-167"/>
</dbReference>
<dbReference type="PDB" id="6RW4">
    <property type="method" value="EM"/>
    <property type="resolution" value="2.97 A"/>
    <property type="chains" value="C=1-167"/>
</dbReference>
<dbReference type="PDB" id="6RW5">
    <property type="method" value="EM"/>
    <property type="resolution" value="3.14 A"/>
    <property type="chains" value="C=1-167"/>
</dbReference>
<dbReference type="PDB" id="6VLZ">
    <property type="method" value="EM"/>
    <property type="resolution" value="2.97 A"/>
    <property type="chains" value="AC=1-167"/>
</dbReference>
<dbReference type="PDB" id="6VMI">
    <property type="method" value="EM"/>
    <property type="resolution" value="2.96 A"/>
    <property type="chains" value="AC=1-167"/>
</dbReference>
<dbReference type="PDB" id="6ZM5">
    <property type="method" value="EM"/>
    <property type="resolution" value="2.89 A"/>
    <property type="chains" value="AC=1-167"/>
</dbReference>
<dbReference type="PDB" id="6ZM6">
    <property type="method" value="EM"/>
    <property type="resolution" value="2.59 A"/>
    <property type="chains" value="AC=1-167"/>
</dbReference>
<dbReference type="PDB" id="6ZS9">
    <property type="method" value="EM"/>
    <property type="resolution" value="4.00 A"/>
    <property type="chains" value="AC=1-167"/>
</dbReference>
<dbReference type="PDB" id="6ZSA">
    <property type="method" value="EM"/>
    <property type="resolution" value="4.00 A"/>
    <property type="chains" value="AC=1-167"/>
</dbReference>
<dbReference type="PDB" id="6ZSB">
    <property type="method" value="EM"/>
    <property type="resolution" value="4.50 A"/>
    <property type="chains" value="AC=1-167"/>
</dbReference>
<dbReference type="PDB" id="6ZSC">
    <property type="method" value="EM"/>
    <property type="resolution" value="3.50 A"/>
    <property type="chains" value="AC=1-167"/>
</dbReference>
<dbReference type="PDB" id="6ZSD">
    <property type="method" value="EM"/>
    <property type="resolution" value="3.70 A"/>
    <property type="chains" value="AC=1-167"/>
</dbReference>
<dbReference type="PDB" id="6ZSE">
    <property type="method" value="EM"/>
    <property type="resolution" value="5.00 A"/>
    <property type="chains" value="AC=1-167"/>
</dbReference>
<dbReference type="PDB" id="6ZSG">
    <property type="method" value="EM"/>
    <property type="resolution" value="4.00 A"/>
    <property type="chains" value="AC=1-167"/>
</dbReference>
<dbReference type="PDB" id="7A5F">
    <property type="method" value="EM"/>
    <property type="resolution" value="4.40 A"/>
    <property type="chains" value="C6=1-167"/>
</dbReference>
<dbReference type="PDB" id="7A5G">
    <property type="method" value="EM"/>
    <property type="resolution" value="4.33 A"/>
    <property type="chains" value="C6=1-167"/>
</dbReference>
<dbReference type="PDB" id="7A5I">
    <property type="method" value="EM"/>
    <property type="resolution" value="3.70 A"/>
    <property type="chains" value="C6=1-167"/>
</dbReference>
<dbReference type="PDB" id="7A5K">
    <property type="method" value="EM"/>
    <property type="resolution" value="3.70 A"/>
    <property type="chains" value="C6=1-167"/>
</dbReference>
<dbReference type="PDB" id="7L08">
    <property type="method" value="EM"/>
    <property type="resolution" value="3.49 A"/>
    <property type="chains" value="AC=1-167"/>
</dbReference>
<dbReference type="PDB" id="7OG4">
    <property type="method" value="EM"/>
    <property type="resolution" value="3.80 A"/>
    <property type="chains" value="AC=1-167"/>
</dbReference>
<dbReference type="PDB" id="7P2E">
    <property type="method" value="EM"/>
    <property type="resolution" value="2.40 A"/>
    <property type="chains" value="C=1-167"/>
</dbReference>
<dbReference type="PDB" id="7PNX">
    <property type="method" value="EM"/>
    <property type="resolution" value="2.76 A"/>
    <property type="chains" value="C=1-167"/>
</dbReference>
<dbReference type="PDB" id="7PNY">
    <property type="method" value="EM"/>
    <property type="resolution" value="3.06 A"/>
    <property type="chains" value="C=1-167"/>
</dbReference>
<dbReference type="PDB" id="7PNZ">
    <property type="method" value="EM"/>
    <property type="resolution" value="3.09 A"/>
    <property type="chains" value="C=1-167"/>
</dbReference>
<dbReference type="PDB" id="7PO0">
    <property type="method" value="EM"/>
    <property type="resolution" value="2.90 A"/>
    <property type="chains" value="C=1-167"/>
</dbReference>
<dbReference type="PDB" id="7PO1">
    <property type="method" value="EM"/>
    <property type="resolution" value="2.92 A"/>
    <property type="chains" value="C=1-167"/>
</dbReference>
<dbReference type="PDB" id="7PO2">
    <property type="method" value="EM"/>
    <property type="resolution" value="3.09 A"/>
    <property type="chains" value="C=1-167"/>
</dbReference>
<dbReference type="PDB" id="7PO3">
    <property type="method" value="EM"/>
    <property type="resolution" value="2.92 A"/>
    <property type="chains" value="C=1-167"/>
</dbReference>
<dbReference type="PDB" id="7QI4">
    <property type="method" value="EM"/>
    <property type="resolution" value="2.21 A"/>
    <property type="chains" value="AC=1-167"/>
</dbReference>
<dbReference type="PDB" id="7QI5">
    <property type="method" value="EM"/>
    <property type="resolution" value="2.63 A"/>
    <property type="chains" value="AC=1-167"/>
</dbReference>
<dbReference type="PDB" id="7QI6">
    <property type="method" value="EM"/>
    <property type="resolution" value="2.98 A"/>
    <property type="chains" value="AC=1-167"/>
</dbReference>
<dbReference type="PDB" id="8ANY">
    <property type="method" value="EM"/>
    <property type="resolution" value="2.85 A"/>
    <property type="chains" value="AC=1-167"/>
</dbReference>
<dbReference type="PDB" id="8CSP">
    <property type="method" value="EM"/>
    <property type="resolution" value="2.66 A"/>
    <property type="chains" value="C=1-167"/>
</dbReference>
<dbReference type="PDB" id="8CSQ">
    <property type="method" value="EM"/>
    <property type="resolution" value="2.54 A"/>
    <property type="chains" value="C=1-167"/>
</dbReference>
<dbReference type="PDB" id="8CSR">
    <property type="method" value="EM"/>
    <property type="resolution" value="2.54 A"/>
    <property type="chains" value="C=1-167"/>
</dbReference>
<dbReference type="PDB" id="8CSS">
    <property type="method" value="EM"/>
    <property type="resolution" value="2.36 A"/>
    <property type="chains" value="C=1-167"/>
</dbReference>
<dbReference type="PDB" id="8CST">
    <property type="method" value="EM"/>
    <property type="resolution" value="2.85 A"/>
    <property type="chains" value="C=1-167"/>
</dbReference>
<dbReference type="PDB" id="8CSU">
    <property type="method" value="EM"/>
    <property type="resolution" value="3.03 A"/>
    <property type="chains" value="C=1-167"/>
</dbReference>
<dbReference type="PDB" id="8K2A">
    <property type="method" value="EM"/>
    <property type="resolution" value="2.90 A"/>
    <property type="chains" value="SZ=1-167"/>
</dbReference>
<dbReference type="PDB" id="8OIR">
    <property type="method" value="EM"/>
    <property type="resolution" value="3.10 A"/>
    <property type="chains" value="AC=1-167"/>
</dbReference>
<dbReference type="PDB" id="8OIS">
    <property type="method" value="EM"/>
    <property type="resolution" value="3.00 A"/>
    <property type="chains" value="AC=1-167"/>
</dbReference>
<dbReference type="PDB" id="8QRK">
    <property type="method" value="EM"/>
    <property type="resolution" value="6.69 A"/>
    <property type="chains" value="C=1-167"/>
</dbReference>
<dbReference type="PDB" id="8QRL">
    <property type="method" value="EM"/>
    <property type="resolution" value="3.34 A"/>
    <property type="chains" value="C=1-167"/>
</dbReference>
<dbReference type="PDB" id="8QRM">
    <property type="method" value="EM"/>
    <property type="resolution" value="3.05 A"/>
    <property type="chains" value="C=1-167"/>
</dbReference>
<dbReference type="PDB" id="8QRN">
    <property type="method" value="EM"/>
    <property type="resolution" value="2.98 A"/>
    <property type="chains" value="C=1-167"/>
</dbReference>
<dbReference type="PDB" id="8RRI">
    <property type="method" value="EM"/>
    <property type="resolution" value="2.40 A"/>
    <property type="chains" value="AC=1-167"/>
</dbReference>
<dbReference type="PDB" id="8XT0">
    <property type="method" value="EM"/>
    <property type="resolution" value="3.20 A"/>
    <property type="chains" value="SZ=1-167"/>
</dbReference>
<dbReference type="PDB" id="8XT2">
    <property type="method" value="EM"/>
    <property type="resolution" value="3.30 A"/>
    <property type="chains" value="SZ=1-167"/>
</dbReference>
<dbReference type="PDBsum" id="3J9M"/>
<dbReference type="PDBsum" id="6NU2"/>
<dbReference type="PDBsum" id="6NU3"/>
<dbReference type="PDBsum" id="6RW4"/>
<dbReference type="PDBsum" id="6RW5"/>
<dbReference type="PDBsum" id="6VLZ"/>
<dbReference type="PDBsum" id="6VMI"/>
<dbReference type="PDBsum" id="6ZM5"/>
<dbReference type="PDBsum" id="6ZM6"/>
<dbReference type="PDBsum" id="6ZS9"/>
<dbReference type="PDBsum" id="6ZSA"/>
<dbReference type="PDBsum" id="6ZSB"/>
<dbReference type="PDBsum" id="6ZSC"/>
<dbReference type="PDBsum" id="6ZSD"/>
<dbReference type="PDBsum" id="6ZSE"/>
<dbReference type="PDBsum" id="6ZSG"/>
<dbReference type="PDBsum" id="7A5F"/>
<dbReference type="PDBsum" id="7A5G"/>
<dbReference type="PDBsum" id="7A5I"/>
<dbReference type="PDBsum" id="7A5K"/>
<dbReference type="PDBsum" id="7L08"/>
<dbReference type="PDBsum" id="7OG4"/>
<dbReference type="PDBsum" id="7P2E"/>
<dbReference type="PDBsum" id="7PNX"/>
<dbReference type="PDBsum" id="7PNY"/>
<dbReference type="PDBsum" id="7PNZ"/>
<dbReference type="PDBsum" id="7PO0"/>
<dbReference type="PDBsum" id="7PO1"/>
<dbReference type="PDBsum" id="7PO2"/>
<dbReference type="PDBsum" id="7PO3"/>
<dbReference type="PDBsum" id="7QI4"/>
<dbReference type="PDBsum" id="7QI5"/>
<dbReference type="PDBsum" id="7QI6"/>
<dbReference type="PDBsum" id="8ANY"/>
<dbReference type="PDBsum" id="8CSP"/>
<dbReference type="PDBsum" id="8CSQ"/>
<dbReference type="PDBsum" id="8CSR"/>
<dbReference type="PDBsum" id="8CSS"/>
<dbReference type="PDBsum" id="8CST"/>
<dbReference type="PDBsum" id="8CSU"/>
<dbReference type="PDBsum" id="8K2A"/>
<dbReference type="PDBsum" id="8OIR"/>
<dbReference type="PDBsum" id="8OIS"/>
<dbReference type="PDBsum" id="8QRK"/>
<dbReference type="PDBsum" id="8QRL"/>
<dbReference type="PDBsum" id="8QRM"/>
<dbReference type="PDBsum" id="8QRN"/>
<dbReference type="PDBsum" id="8RRI"/>
<dbReference type="PDBsum" id="8XT0"/>
<dbReference type="PDBsum" id="8XT2"/>
<dbReference type="EMDB" id="EMD-0514"/>
<dbReference type="EMDB" id="EMD-0515"/>
<dbReference type="EMDB" id="EMD-10021"/>
<dbReference type="EMDB" id="EMD-10022"/>
<dbReference type="EMDB" id="EMD-11278"/>
<dbReference type="EMDB" id="EMD-11279"/>
<dbReference type="EMDB" id="EMD-11390"/>
<dbReference type="EMDB" id="EMD-11391"/>
<dbReference type="EMDB" id="EMD-11392"/>
<dbReference type="EMDB" id="EMD-11393"/>
<dbReference type="EMDB" id="EMD-11394"/>
<dbReference type="EMDB" id="EMD-11395"/>
<dbReference type="EMDB" id="EMD-11397"/>
<dbReference type="EMDB" id="EMD-11641"/>
<dbReference type="EMDB" id="EMD-11642"/>
<dbReference type="EMDB" id="EMD-11644"/>
<dbReference type="EMDB" id="EMD-11646"/>
<dbReference type="EMDB" id="EMD-12877"/>
<dbReference type="EMDB" id="EMD-13170"/>
<dbReference type="EMDB" id="EMD-13555"/>
<dbReference type="EMDB" id="EMD-13556"/>
<dbReference type="EMDB" id="EMD-13557"/>
<dbReference type="EMDB" id="EMD-13558"/>
<dbReference type="EMDB" id="EMD-13559"/>
<dbReference type="EMDB" id="EMD-13560"/>
<dbReference type="EMDB" id="EMD-13561"/>
<dbReference type="EMDB" id="EMD-13980"/>
<dbReference type="EMDB" id="EMD-13981"/>
<dbReference type="EMDB" id="EMD-13982"/>
<dbReference type="EMDB" id="EMD-15544"/>
<dbReference type="EMDB" id="EMD-16897"/>
<dbReference type="EMDB" id="EMD-16898"/>
<dbReference type="EMDB" id="EMD-19460"/>
<dbReference type="EMDB" id="EMD-21233"/>
<dbReference type="EMDB" id="EMD-21242"/>
<dbReference type="EMDB" id="EMD-23096"/>
<dbReference type="EMDB" id="EMD-26966"/>
<dbReference type="EMDB" id="EMD-26967"/>
<dbReference type="EMDB" id="EMD-26968"/>
<dbReference type="EMDB" id="EMD-26969"/>
<dbReference type="EMDB" id="EMD-26970"/>
<dbReference type="EMDB" id="EMD-26971"/>
<dbReference type="EMDB" id="EMD-36836"/>
<dbReference type="EMDB" id="EMD-38632"/>
<dbReference type="EMDB" id="EMD-38634"/>
<dbReference type="SMR" id="Q96EL2"/>
<dbReference type="BioGRID" id="122357">
    <property type="interactions" value="297"/>
</dbReference>
<dbReference type="ComplexPortal" id="CPX-5225">
    <property type="entry name" value="28S mitochondrial small ribosomal subunit"/>
</dbReference>
<dbReference type="CORUM" id="Q96EL2"/>
<dbReference type="FunCoup" id="Q96EL2">
    <property type="interactions" value="815"/>
</dbReference>
<dbReference type="IntAct" id="Q96EL2">
    <property type="interactions" value="167"/>
</dbReference>
<dbReference type="MINT" id="Q96EL2"/>
<dbReference type="STRING" id="9606.ENSP00000318158"/>
<dbReference type="GlyGen" id="Q96EL2">
    <property type="glycosylation" value="1 site, 1 O-linked glycan (1 site)"/>
</dbReference>
<dbReference type="iPTMnet" id="Q96EL2"/>
<dbReference type="PhosphoSitePlus" id="Q96EL2"/>
<dbReference type="BioMuta" id="MRPS24"/>
<dbReference type="jPOST" id="Q96EL2"/>
<dbReference type="MassIVE" id="Q96EL2"/>
<dbReference type="PaxDb" id="9606-ENSP00000318158"/>
<dbReference type="PeptideAtlas" id="Q96EL2"/>
<dbReference type="ProteomicsDB" id="76423"/>
<dbReference type="Pumba" id="Q96EL2"/>
<dbReference type="TopDownProteomics" id="Q96EL2"/>
<dbReference type="Antibodypedia" id="44496">
    <property type="antibodies" value="112 antibodies from 24 providers"/>
</dbReference>
<dbReference type="DNASU" id="64951"/>
<dbReference type="Ensembl" id="ENST00000317534.6">
    <property type="protein sequence ID" value="ENSP00000318158.5"/>
    <property type="gene ID" value="ENSG00000062582.14"/>
</dbReference>
<dbReference type="GeneID" id="64951"/>
<dbReference type="KEGG" id="hsa:64951"/>
<dbReference type="MANE-Select" id="ENST00000317534.6">
    <property type="protein sequence ID" value="ENSP00000318158.5"/>
    <property type="RefSeq nucleotide sequence ID" value="NM_032014.3"/>
    <property type="RefSeq protein sequence ID" value="NP_114403.1"/>
</dbReference>
<dbReference type="UCSC" id="uc003tit.2">
    <property type="organism name" value="human"/>
</dbReference>
<dbReference type="AGR" id="HGNC:14510"/>
<dbReference type="CTD" id="64951"/>
<dbReference type="GeneCards" id="MRPS24"/>
<dbReference type="HGNC" id="HGNC:14510">
    <property type="gene designation" value="MRPS24"/>
</dbReference>
<dbReference type="HPA" id="ENSG00000062582">
    <property type="expression patterns" value="Tissue enhanced (skeletal)"/>
</dbReference>
<dbReference type="MIM" id="611986">
    <property type="type" value="gene"/>
</dbReference>
<dbReference type="neXtProt" id="NX_Q96EL2"/>
<dbReference type="OpenTargets" id="ENSG00000062582"/>
<dbReference type="PharmGKB" id="PA31012"/>
<dbReference type="VEuPathDB" id="HostDB:ENSG00000062582"/>
<dbReference type="eggNOG" id="ENOG502RXU1">
    <property type="taxonomic scope" value="Eukaryota"/>
</dbReference>
<dbReference type="GeneTree" id="ENSGT00390000011179"/>
<dbReference type="HOGENOM" id="CLU_134150_0_0_1"/>
<dbReference type="InParanoid" id="Q96EL2"/>
<dbReference type="OMA" id="FLQGYTE"/>
<dbReference type="OrthoDB" id="5950413at2759"/>
<dbReference type="PAN-GO" id="Q96EL2">
    <property type="GO annotations" value="0 GO annotations based on evolutionary models"/>
</dbReference>
<dbReference type="PhylomeDB" id="Q96EL2"/>
<dbReference type="TreeFam" id="TF324311"/>
<dbReference type="PathwayCommons" id="Q96EL2"/>
<dbReference type="Reactome" id="R-HSA-5368286">
    <property type="pathway name" value="Mitochondrial translation initiation"/>
</dbReference>
<dbReference type="Reactome" id="R-HSA-5389840">
    <property type="pathway name" value="Mitochondrial translation elongation"/>
</dbReference>
<dbReference type="Reactome" id="R-HSA-5419276">
    <property type="pathway name" value="Mitochondrial translation termination"/>
</dbReference>
<dbReference type="SignaLink" id="Q96EL2"/>
<dbReference type="SIGNOR" id="Q96EL2"/>
<dbReference type="BioGRID-ORCS" id="64951">
    <property type="hits" value="419 hits in 1170 CRISPR screens"/>
</dbReference>
<dbReference type="GeneWiki" id="MRPS24"/>
<dbReference type="GenomeRNAi" id="64951"/>
<dbReference type="Pharos" id="Q96EL2">
    <property type="development level" value="Tdark"/>
</dbReference>
<dbReference type="PRO" id="PR:Q96EL2"/>
<dbReference type="Proteomes" id="UP000005640">
    <property type="component" value="Chromosome 7"/>
</dbReference>
<dbReference type="RNAct" id="Q96EL2">
    <property type="molecule type" value="protein"/>
</dbReference>
<dbReference type="Bgee" id="ENSG00000062582">
    <property type="expression patterns" value="Expressed in gastrocnemius and 101 other cell types or tissues"/>
</dbReference>
<dbReference type="ExpressionAtlas" id="Q96EL2">
    <property type="expression patterns" value="baseline and differential"/>
</dbReference>
<dbReference type="GO" id="GO:0005743">
    <property type="term" value="C:mitochondrial inner membrane"/>
    <property type="evidence" value="ECO:0000304"/>
    <property type="project" value="Reactome"/>
</dbReference>
<dbReference type="GO" id="GO:0005763">
    <property type="term" value="C:mitochondrial small ribosomal subunit"/>
    <property type="evidence" value="ECO:0000250"/>
    <property type="project" value="UniProtKB"/>
</dbReference>
<dbReference type="GO" id="GO:0005739">
    <property type="term" value="C:mitochondrion"/>
    <property type="evidence" value="ECO:0006056"/>
    <property type="project" value="FlyBase"/>
</dbReference>
<dbReference type="GO" id="GO:0003723">
    <property type="term" value="F:RNA binding"/>
    <property type="evidence" value="ECO:0007005"/>
    <property type="project" value="UniProtKB"/>
</dbReference>
<dbReference type="GO" id="GO:0003735">
    <property type="term" value="F:structural constituent of ribosome"/>
    <property type="evidence" value="ECO:0000250"/>
    <property type="project" value="UniProtKB"/>
</dbReference>
<dbReference type="GO" id="GO:0032543">
    <property type="term" value="P:mitochondrial translation"/>
    <property type="evidence" value="ECO:0000250"/>
    <property type="project" value="UniProtKB"/>
</dbReference>
<dbReference type="InterPro" id="IPR026146">
    <property type="entry name" value="Ribosomal_uS3m"/>
</dbReference>
<dbReference type="PANTHER" id="PTHR21244">
    <property type="entry name" value="MITOCHONDRIAL 28S RIBOSOMAL PROTEIN S24"/>
    <property type="match status" value="1"/>
</dbReference>
<dbReference type="PANTHER" id="PTHR21244:SF1">
    <property type="entry name" value="SMALL RIBOSOMAL SUBUNIT PROTEIN US3M"/>
    <property type="match status" value="1"/>
</dbReference>
<dbReference type="Pfam" id="PF14955">
    <property type="entry name" value="MRP-S24"/>
    <property type="match status" value="1"/>
</dbReference>
<comment type="subunit">
    <text evidence="2">Component of the mitochondrial small ribosomal subunit (mt-SSU). Mature mammalian 55S mitochondrial ribosomes consist of a small (28S) and a large (39S) subunit. The 28S small subunit contains a 12S ribosomal RNA (12S mt-rRNA) and 30 different proteins. The 39S large subunit contains a 16S rRNA (16S mt-rRNA), a copy of mitochondrial valine transfer RNA (mt-tRNA(Val)), which plays an integral structural role, and 52 different proteins.</text>
</comment>
<comment type="subcellular location">
    <subcellularLocation>
        <location evidence="2">Mitochondrion</location>
    </subcellularLocation>
</comment>
<comment type="similarity">
    <text evidence="4">Belongs to the universal ribosomal protein uS3 family.</text>
</comment>
<comment type="sequence caution" evidence="4">
    <conflict type="frameshift">
        <sequence resource="EMBL-CDS" id="AAF29013"/>
    </conflict>
</comment>